<evidence type="ECO:0000250" key="1">
    <source>
        <dbReference type="UniProtKB" id="P69937"/>
    </source>
</evidence>
<evidence type="ECO:0000255" key="2"/>
<evidence type="ECO:0000305" key="3"/>
<feature type="chain" id="PRO_0000108102" description="Guanidinium exporter">
    <location>
        <begin position="1"/>
        <end position="105"/>
    </location>
</feature>
<feature type="transmembrane region" description="Helical" evidence="2">
    <location>
        <begin position="1"/>
        <end position="21"/>
    </location>
</feature>
<feature type="topological domain" description="Cytoplasmic" evidence="2">
    <location>
        <begin position="22"/>
        <end position="28"/>
    </location>
</feature>
<feature type="transmembrane region" description="Helical" evidence="2">
    <location>
        <begin position="29"/>
        <end position="49"/>
    </location>
</feature>
<feature type="topological domain" description="Periplasmic" evidence="2">
    <location>
        <begin position="50"/>
        <end position="57"/>
    </location>
</feature>
<feature type="transmembrane region" description="Helical" evidence="2">
    <location>
        <begin position="58"/>
        <end position="78"/>
    </location>
</feature>
<feature type="topological domain" description="Cytoplasmic" evidence="2">
    <location>
        <begin position="79"/>
        <end position="81"/>
    </location>
</feature>
<feature type="transmembrane region" description="Helical" evidence="2">
    <location>
        <begin position="82"/>
        <end position="102"/>
    </location>
</feature>
<feature type="topological domain" description="Periplasmic" evidence="2">
    <location>
        <begin position="103"/>
        <end position="105"/>
    </location>
</feature>
<dbReference type="EMBL" id="AY253913">
    <property type="protein sequence ID" value="AAP92686.1"/>
    <property type="molecule type" value="Genomic_DNA"/>
</dbReference>
<dbReference type="EMBL" id="AY509004">
    <property type="protein sequence ID" value="AAS76375.1"/>
    <property type="status" value="ALT_INIT"/>
    <property type="molecule type" value="Genomic_DNA"/>
</dbReference>
<dbReference type="RefSeq" id="WP_000118520.1">
    <property type="nucleotide sequence ID" value="NC_006856.1"/>
</dbReference>
<dbReference type="SMR" id="Q79K00"/>
<dbReference type="GeneID" id="93521401"/>
<dbReference type="KEGG" id="sec:SCH_092"/>
<dbReference type="HOGENOM" id="CLU_133067_1_1_6"/>
<dbReference type="Proteomes" id="UP000000538">
    <property type="component" value="Plasmid pSC138"/>
</dbReference>
<dbReference type="GO" id="GO:0005886">
    <property type="term" value="C:plasma membrane"/>
    <property type="evidence" value="ECO:0007669"/>
    <property type="project" value="UniProtKB-SubCell"/>
</dbReference>
<dbReference type="GO" id="GO:0022857">
    <property type="term" value="F:transmembrane transporter activity"/>
    <property type="evidence" value="ECO:0007669"/>
    <property type="project" value="InterPro"/>
</dbReference>
<dbReference type="GO" id="GO:0006811">
    <property type="term" value="P:monoatomic ion transport"/>
    <property type="evidence" value="ECO:0007669"/>
    <property type="project" value="UniProtKB-KW"/>
</dbReference>
<dbReference type="FunFam" id="1.10.3730.20:FF:000001">
    <property type="entry name" value="Quaternary ammonium compound resistance transporter SugE"/>
    <property type="match status" value="1"/>
</dbReference>
<dbReference type="Gene3D" id="1.10.3730.20">
    <property type="match status" value="1"/>
</dbReference>
<dbReference type="InterPro" id="IPR000390">
    <property type="entry name" value="Small_drug/metabolite_transptr"/>
</dbReference>
<dbReference type="InterPro" id="IPR045324">
    <property type="entry name" value="Small_multidrug_res"/>
</dbReference>
<dbReference type="NCBIfam" id="NF008512">
    <property type="entry name" value="PRK11431.1"/>
    <property type="match status" value="1"/>
</dbReference>
<dbReference type="PANTHER" id="PTHR30561:SF0">
    <property type="entry name" value="GUANIDINIUM EXPORTER"/>
    <property type="match status" value="1"/>
</dbReference>
<dbReference type="PANTHER" id="PTHR30561">
    <property type="entry name" value="SMR FAMILY PROTON-DEPENDENT DRUG EFFLUX TRANSPORTER SUGE"/>
    <property type="match status" value="1"/>
</dbReference>
<dbReference type="Pfam" id="PF00893">
    <property type="entry name" value="Multi_Drug_Res"/>
    <property type="match status" value="1"/>
</dbReference>
<dbReference type="SUPFAM" id="SSF103481">
    <property type="entry name" value="Multidrug resistance efflux transporter EmrE"/>
    <property type="match status" value="1"/>
</dbReference>
<protein>
    <recommendedName>
        <fullName evidence="1">Guanidinium exporter</fullName>
    </recommendedName>
</protein>
<organism>
    <name type="scientific">Salmonella choleraesuis (strain SC-B67)</name>
    <dbReference type="NCBI Taxonomy" id="321314"/>
    <lineage>
        <taxon>Bacteria</taxon>
        <taxon>Pseudomonadati</taxon>
        <taxon>Pseudomonadota</taxon>
        <taxon>Gammaproteobacteria</taxon>
        <taxon>Enterobacterales</taxon>
        <taxon>Enterobacteriaceae</taxon>
        <taxon>Salmonella</taxon>
    </lineage>
</organism>
<geneLocation type="plasmid">
    <name>pSCR1</name>
</geneLocation>
<geneLocation type="plasmid">
    <name>pSC138</name>
</geneLocation>
<comment type="function">
    <text evidence="1">Guanidinium ion exporter. Couples guanidinium export to the proton motive force, exchanging one guanidinium ion for two protons.</text>
</comment>
<comment type="subcellular location">
    <subcellularLocation>
        <location evidence="1">Cell inner membrane</location>
        <topology evidence="1">Multi-pass membrane protein</topology>
    </subcellularLocation>
</comment>
<comment type="similarity">
    <text evidence="3">Belongs to the drug/metabolite transporter (DMT) superfamily. Small multidrug resistance (SMR) (TC 2.A.7.1) family. Gdx/SugE subfamily.</text>
</comment>
<comment type="sequence caution" evidence="3">
    <conflict type="erroneous initiation">
        <sequence resource="EMBL-CDS" id="AAS76375"/>
    </conflict>
</comment>
<gene>
    <name evidence="1" type="primary">gdx</name>
    <name type="synonym">sugE</name>
    <name type="ordered locus">SCH_092</name>
</gene>
<reference key="1">
    <citation type="submission" date="2003-03" db="EMBL/GenBank/DDBJ databases">
        <title>AmpC resistant Salmonella enterica Choleraesuis.</title>
        <authorList>
            <person name="Chiu C.-H."/>
            <person name="Chu C."/>
        </authorList>
    </citation>
    <scope>NUCLEOTIDE SEQUENCE [GENOMIC DNA]</scope>
    <source>
        <strain>SC-B67</strain>
        <plasmid>pSCR1</plasmid>
    </source>
</reference>
<reference key="2">
    <citation type="journal article" date="2005" name="Nucleic Acids Res.">
        <title>The genome sequence of Salmonella enterica serovar Choleraesuis, a highly invasive and resistant zoonotic pathogen.</title>
        <authorList>
            <person name="Chiu C.-H."/>
            <person name="Tang P."/>
            <person name="Chu C."/>
            <person name="Hu S."/>
            <person name="Bao Q."/>
            <person name="Yu J."/>
            <person name="Chou Y.-Y."/>
            <person name="Wang H.-S."/>
            <person name="Lee Y.-S."/>
        </authorList>
    </citation>
    <scope>NUCLEOTIDE SEQUENCE [LARGE SCALE GENOMIC DNA]</scope>
    <source>
        <strain>SC-B67</strain>
        <plasmid>pSC138</plasmid>
    </source>
</reference>
<proteinExistence type="inferred from homology"/>
<keyword id="KW-0997">Cell inner membrane</keyword>
<keyword id="KW-1003">Cell membrane</keyword>
<keyword id="KW-0406">Ion transport</keyword>
<keyword id="KW-0472">Membrane</keyword>
<keyword id="KW-0614">Plasmid</keyword>
<keyword id="KW-0812">Transmembrane</keyword>
<keyword id="KW-1133">Transmembrane helix</keyword>
<keyword id="KW-0813">Transport</keyword>
<sequence length="105" mass="10897">MSWIVLLIAGLLEVVWAIGLKYTHGFTRLTPSIITIAAMIVSIAMLSWAMRTLPVGTAYAVWTGIGAVGAAITGILLLGESASPARLLSLGLIVAGIIGLKLSTH</sequence>
<name>GDX_SALCH</name>
<accession>Q79K00</accession>
<accession>Q5J3Z0</accession>